<organism>
    <name type="scientific">Bos taurus</name>
    <name type="common">Bovine</name>
    <dbReference type="NCBI Taxonomy" id="9913"/>
    <lineage>
        <taxon>Eukaryota</taxon>
        <taxon>Metazoa</taxon>
        <taxon>Chordata</taxon>
        <taxon>Craniata</taxon>
        <taxon>Vertebrata</taxon>
        <taxon>Euteleostomi</taxon>
        <taxon>Mammalia</taxon>
        <taxon>Eutheria</taxon>
        <taxon>Laurasiatheria</taxon>
        <taxon>Artiodactyla</taxon>
        <taxon>Ruminantia</taxon>
        <taxon>Pecora</taxon>
        <taxon>Bovidae</taxon>
        <taxon>Bovinae</taxon>
        <taxon>Bos</taxon>
    </lineage>
</organism>
<proteinExistence type="evidence at transcript level"/>
<feature type="chain" id="PRO_0000259912" description="Matrix metalloproteinase-23">
    <location>
        <begin position="1"/>
        <end position="393"/>
    </location>
</feature>
<feature type="propeptide" id="PRO_0000259913" evidence="2">
    <location>
        <begin position="1"/>
        <end position="81"/>
    </location>
</feature>
<feature type="chain" id="PRO_0000259914" description="Matrix metalloproteinase-23, soluble form" evidence="1">
    <location>
        <begin position="82"/>
        <end position="393"/>
    </location>
</feature>
<feature type="topological domain" description="Cytoplasmic" evidence="2">
    <location>
        <begin position="1"/>
        <end position="20"/>
    </location>
</feature>
<feature type="transmembrane region" description="Helical; Signal-anchor for type II membrane protein" evidence="2">
    <location>
        <begin position="21"/>
        <end position="41"/>
    </location>
</feature>
<feature type="topological domain" description="Lumenal" evidence="2">
    <location>
        <begin position="42"/>
        <end position="393"/>
    </location>
</feature>
<feature type="domain" description="ShKT" evidence="3">
    <location>
        <begin position="258"/>
        <end position="292"/>
    </location>
</feature>
<feature type="domain" description="Ig-like C2-type">
    <location>
        <begin position="298"/>
        <end position="383"/>
    </location>
</feature>
<feature type="region of interest" description="Disordered" evidence="5">
    <location>
        <begin position="60"/>
        <end position="79"/>
    </location>
</feature>
<feature type="active site" evidence="4">
    <location>
        <position position="215"/>
    </location>
</feature>
<feature type="binding site" evidence="4">
    <location>
        <position position="214"/>
    </location>
    <ligand>
        <name>Zn(2+)</name>
        <dbReference type="ChEBI" id="CHEBI:29105"/>
        <note>catalytic</note>
    </ligand>
</feature>
<feature type="binding site" evidence="4">
    <location>
        <position position="218"/>
    </location>
    <ligand>
        <name>Zn(2+)</name>
        <dbReference type="ChEBI" id="CHEBI:29105"/>
        <note>catalytic</note>
    </ligand>
</feature>
<feature type="binding site" evidence="4">
    <location>
        <position position="224"/>
    </location>
    <ligand>
        <name>Zn(2+)</name>
        <dbReference type="ChEBI" id="CHEBI:29105"/>
        <note>catalytic</note>
    </ligand>
</feature>
<feature type="site" description="Cleavage; by furin-like protease" evidence="2">
    <location>
        <begin position="81"/>
        <end position="82"/>
    </location>
</feature>
<feature type="glycosylation site" description="N-linked (GlcNAc...) asparagine" evidence="2">
    <location>
        <position position="95"/>
    </location>
</feature>
<feature type="glycosylation site" description="N-linked (GlcNAc...) asparagine" evidence="2">
    <location>
        <position position="151"/>
    </location>
</feature>
<feature type="glycosylation site" description="N-linked (GlcNAc...) asparagine" evidence="2">
    <location>
        <position position="235"/>
    </location>
</feature>
<feature type="glycosylation site" description="N-linked (GlcNAc...) asparagine" evidence="2">
    <location>
        <position position="319"/>
    </location>
</feature>
<feature type="disulfide bond" evidence="1">
    <location>
        <begin position="258"/>
        <end position="292"/>
    </location>
</feature>
<feature type="disulfide bond" evidence="1">
    <location>
        <begin position="265"/>
        <end position="285"/>
    </location>
</feature>
<feature type="disulfide bond" evidence="1">
    <location>
        <begin position="274"/>
        <end position="289"/>
    </location>
</feature>
<feature type="disulfide bond" evidence="1">
    <location>
        <begin position="324"/>
        <end position="373"/>
    </location>
</feature>
<dbReference type="EC" id="3.4.24.-"/>
<dbReference type="EMBL" id="BC109902">
    <property type="protein sequence ID" value="AAI09903.1"/>
    <property type="molecule type" value="mRNA"/>
</dbReference>
<dbReference type="RefSeq" id="NP_001033645.1">
    <property type="nucleotide sequence ID" value="NM_001038556.2"/>
</dbReference>
<dbReference type="SMR" id="Q2TBM7"/>
<dbReference type="FunCoup" id="Q2TBM7">
    <property type="interactions" value="178"/>
</dbReference>
<dbReference type="STRING" id="9913.ENSBTAP00000065945"/>
<dbReference type="MEROPS" id="M10.022"/>
<dbReference type="GlyCosmos" id="Q2TBM7">
    <property type="glycosylation" value="4 sites, No reported glycans"/>
</dbReference>
<dbReference type="GlyGen" id="Q2TBM7">
    <property type="glycosylation" value="4 sites"/>
</dbReference>
<dbReference type="PaxDb" id="9913-ENSBTAP00000014210"/>
<dbReference type="GeneID" id="527590"/>
<dbReference type="KEGG" id="bta:527590"/>
<dbReference type="CTD" id="26561"/>
<dbReference type="eggNOG" id="KOG1565">
    <property type="taxonomic scope" value="Eukaryota"/>
</dbReference>
<dbReference type="InParanoid" id="Q2TBM7"/>
<dbReference type="OrthoDB" id="65569at2759"/>
<dbReference type="Proteomes" id="UP000009136">
    <property type="component" value="Unplaced"/>
</dbReference>
<dbReference type="GO" id="GO:0005789">
    <property type="term" value="C:endoplasmic reticulum membrane"/>
    <property type="evidence" value="ECO:0007669"/>
    <property type="project" value="UniProtKB-SubCell"/>
</dbReference>
<dbReference type="GO" id="GO:0031012">
    <property type="term" value="C:extracellular matrix"/>
    <property type="evidence" value="ECO:0007669"/>
    <property type="project" value="InterPro"/>
</dbReference>
<dbReference type="GO" id="GO:0005615">
    <property type="term" value="C:extracellular space"/>
    <property type="evidence" value="ECO:0000318"/>
    <property type="project" value="GO_Central"/>
</dbReference>
<dbReference type="GO" id="GO:0004222">
    <property type="term" value="F:metalloendopeptidase activity"/>
    <property type="evidence" value="ECO:0000318"/>
    <property type="project" value="GO_Central"/>
</dbReference>
<dbReference type="GO" id="GO:0008270">
    <property type="term" value="F:zinc ion binding"/>
    <property type="evidence" value="ECO:0007669"/>
    <property type="project" value="InterPro"/>
</dbReference>
<dbReference type="GO" id="GO:0030574">
    <property type="term" value="P:collagen catabolic process"/>
    <property type="evidence" value="ECO:0000318"/>
    <property type="project" value="GO_Central"/>
</dbReference>
<dbReference type="GO" id="GO:0030198">
    <property type="term" value="P:extracellular matrix organization"/>
    <property type="evidence" value="ECO:0000318"/>
    <property type="project" value="GO_Central"/>
</dbReference>
<dbReference type="GO" id="GO:0006508">
    <property type="term" value="P:proteolysis"/>
    <property type="evidence" value="ECO:0007669"/>
    <property type="project" value="UniProtKB-KW"/>
</dbReference>
<dbReference type="CDD" id="cd00096">
    <property type="entry name" value="Ig"/>
    <property type="match status" value="1"/>
</dbReference>
<dbReference type="CDD" id="cd04278">
    <property type="entry name" value="ZnMc_MMP"/>
    <property type="match status" value="1"/>
</dbReference>
<dbReference type="FunFam" id="1.10.10.1940:FF:000001">
    <property type="entry name" value="Matrix metallopeptidase 23B"/>
    <property type="match status" value="1"/>
</dbReference>
<dbReference type="FunFam" id="3.40.390.10:FF:000024">
    <property type="entry name" value="Matrix metallopeptidase 23B"/>
    <property type="match status" value="1"/>
</dbReference>
<dbReference type="FunFam" id="2.60.40.10:FF:000565">
    <property type="entry name" value="Matrix metalloproteinase-23"/>
    <property type="match status" value="1"/>
</dbReference>
<dbReference type="Gene3D" id="1.10.10.1940">
    <property type="match status" value="1"/>
</dbReference>
<dbReference type="Gene3D" id="3.40.390.10">
    <property type="entry name" value="Collagenase (Catalytic Domain)"/>
    <property type="match status" value="1"/>
</dbReference>
<dbReference type="Gene3D" id="2.60.40.10">
    <property type="entry name" value="Immunoglobulins"/>
    <property type="match status" value="1"/>
</dbReference>
<dbReference type="InterPro" id="IPR007110">
    <property type="entry name" value="Ig-like_dom"/>
</dbReference>
<dbReference type="InterPro" id="IPR036179">
    <property type="entry name" value="Ig-like_dom_sf"/>
</dbReference>
<dbReference type="InterPro" id="IPR013783">
    <property type="entry name" value="Ig-like_fold"/>
</dbReference>
<dbReference type="InterPro" id="IPR033739">
    <property type="entry name" value="M10A_MMP"/>
</dbReference>
<dbReference type="InterPro" id="IPR024079">
    <property type="entry name" value="MetalloPept_cat_dom_sf"/>
</dbReference>
<dbReference type="InterPro" id="IPR001818">
    <property type="entry name" value="Pept_M10_metallopeptidase"/>
</dbReference>
<dbReference type="InterPro" id="IPR021190">
    <property type="entry name" value="Pept_M10A"/>
</dbReference>
<dbReference type="InterPro" id="IPR006026">
    <property type="entry name" value="Peptidase_Metallo"/>
</dbReference>
<dbReference type="InterPro" id="IPR003582">
    <property type="entry name" value="ShKT_dom"/>
</dbReference>
<dbReference type="PANTHER" id="PTHR10201">
    <property type="entry name" value="MATRIX METALLOPROTEINASE"/>
    <property type="match status" value="1"/>
</dbReference>
<dbReference type="PANTHER" id="PTHR10201:SF7">
    <property type="entry name" value="MATRIX METALLOPROTEINASE-23"/>
    <property type="match status" value="1"/>
</dbReference>
<dbReference type="Pfam" id="PF00413">
    <property type="entry name" value="Peptidase_M10"/>
    <property type="match status" value="1"/>
</dbReference>
<dbReference type="Pfam" id="PF01549">
    <property type="entry name" value="ShK"/>
    <property type="match status" value="1"/>
</dbReference>
<dbReference type="PRINTS" id="PR00138">
    <property type="entry name" value="MATRIXIN"/>
</dbReference>
<dbReference type="SMART" id="SM00254">
    <property type="entry name" value="ShKT"/>
    <property type="match status" value="1"/>
</dbReference>
<dbReference type="SMART" id="SM00235">
    <property type="entry name" value="ZnMc"/>
    <property type="match status" value="1"/>
</dbReference>
<dbReference type="SUPFAM" id="SSF48726">
    <property type="entry name" value="Immunoglobulin"/>
    <property type="match status" value="1"/>
</dbReference>
<dbReference type="SUPFAM" id="SSF55486">
    <property type="entry name" value="Metalloproteases ('zincins'), catalytic domain"/>
    <property type="match status" value="1"/>
</dbReference>
<dbReference type="PROSITE" id="PS50835">
    <property type="entry name" value="IG_LIKE"/>
    <property type="match status" value="1"/>
</dbReference>
<dbReference type="PROSITE" id="PS51670">
    <property type="entry name" value="SHKT"/>
    <property type="match status" value="1"/>
</dbReference>
<dbReference type="PROSITE" id="PS00142">
    <property type="entry name" value="ZINC_PROTEASE"/>
    <property type="match status" value="1"/>
</dbReference>
<sequence length="393" mass="43964">MGRGACVPSAASGAGDRARQLGAVLGALCLFPALVLLAWPGTPANGAGARVAQGDAAPQTSGVLASGSLGPPHPPVPRRRRYTLTPARLRWEHFNLTYKILSFPRNLLSPSETRRGLAAAFRMWSDVSPFSFREVAPEQPSDLRIGFYPVNHTDCLVSPLHHCFDGPTGELAHAFFPPHGGIHFDDSEYWVLGRTRYSWKKGVWLTDLVHVAAHEIGHALGLMHSQHGRALMHLNATLRGWKALSQDELWGLHRLYGCLDRLFVCASWARRGFCDTRRRLMKRLCPSSCDFCYEFPFPTVAATPPPPRTKTKLVPEGRNVTFRCGQKILHKKGKVYWYKDQEPLEFSYPGYLALGEAHLSIIANAINEGTYTCVVRRRQRVLSTYSWRIRVRS</sequence>
<accession>Q2TBM7</accession>
<protein>
    <recommendedName>
        <fullName>Matrix metalloproteinase-23</fullName>
        <shortName>MMP-23</shortName>
        <ecNumber>3.4.24.-</ecNumber>
    </recommendedName>
    <alternativeName>
        <fullName>Matrix metallopeptidase 23B</fullName>
    </alternativeName>
    <component>
        <recommendedName>
            <fullName>Matrix metalloproteinase-23, soluble form</fullName>
        </recommendedName>
    </component>
</protein>
<name>MMP23_BOVIN</name>
<evidence type="ECO:0000250" key="1"/>
<evidence type="ECO:0000255" key="2"/>
<evidence type="ECO:0000255" key="3">
    <source>
        <dbReference type="PROSITE-ProRule" id="PRU01005"/>
    </source>
</evidence>
<evidence type="ECO:0000255" key="4">
    <source>
        <dbReference type="PROSITE-ProRule" id="PRU10095"/>
    </source>
</evidence>
<evidence type="ECO:0000256" key="5">
    <source>
        <dbReference type="SAM" id="MobiDB-lite"/>
    </source>
</evidence>
<evidence type="ECO:0000305" key="6"/>
<keyword id="KW-0165">Cleavage on pair of basic residues</keyword>
<keyword id="KW-1015">Disulfide bond</keyword>
<keyword id="KW-0256">Endoplasmic reticulum</keyword>
<keyword id="KW-0325">Glycoprotein</keyword>
<keyword id="KW-0378">Hydrolase</keyword>
<keyword id="KW-0393">Immunoglobulin domain</keyword>
<keyword id="KW-0472">Membrane</keyword>
<keyword id="KW-0479">Metal-binding</keyword>
<keyword id="KW-0482">Metalloprotease</keyword>
<keyword id="KW-0645">Protease</keyword>
<keyword id="KW-1185">Reference proteome</keyword>
<keyword id="KW-0735">Signal-anchor</keyword>
<keyword id="KW-0812">Transmembrane</keyword>
<keyword id="KW-1133">Transmembrane helix</keyword>
<keyword id="KW-0862">Zinc</keyword>
<keyword id="KW-0865">Zymogen</keyword>
<reference key="1">
    <citation type="submission" date="2005-11" db="EMBL/GenBank/DDBJ databases">
        <authorList>
            <consortium name="NIH - Mammalian Gene Collection (MGC) project"/>
        </authorList>
    </citation>
    <scope>NUCLEOTIDE SEQUENCE [LARGE SCALE MRNA]</scope>
    <source>
        <strain>Crossbred X Angus</strain>
        <tissue>Liver</tissue>
    </source>
</reference>
<comment type="function">
    <text evidence="1">Protease. May regulate the surface expression of some potassium channels by retaining them in the endoplasmic reticulum (By similarity).</text>
</comment>
<comment type="cofactor">
    <cofactor evidence="1">
        <name>Zn(2+)</name>
        <dbReference type="ChEBI" id="CHEBI:29105"/>
    </cofactor>
    <text evidence="1">Binds 1 zinc ion per subunit.</text>
</comment>
<comment type="subcellular location">
    <subcellularLocation>
        <location evidence="1">Membrane</location>
        <topology evidence="1">Single-pass type II membrane protein</topology>
    </subcellularLocation>
    <subcellularLocation>
        <location evidence="1">Endoplasmic reticulum membrane</location>
        <topology evidence="1">Single-pass type II membrane protein</topology>
    </subcellularLocation>
    <text evidence="1">A secreted form produced by proteolytic cleavage may also exist.</text>
</comment>
<comment type="domain">
    <text evidence="1">The ShKT domain associates with, and blocks several potassium channels in the nanomolar to low micromolar range. The relative affinity is Kv1.6 &gt; Kv1.3 &gt; Kv1.1 = Kv3.2 &gt; Kv1.4.</text>
</comment>
<comment type="PTM">
    <text evidence="1">N-glycosylated.</text>
</comment>
<comment type="PTM">
    <text evidence="1">Proteolytic cleavage might yield an active form.</text>
</comment>
<comment type="similarity">
    <text evidence="6">Belongs to the peptidase M10A family.</text>
</comment>
<gene>
    <name type="primary">MMP23</name>
    <name type="synonym">MMP23B</name>
</gene>